<protein>
    <recommendedName>
        <fullName>DNA-directed RNA polymerase I subunit RPA2</fullName>
        <shortName>RNA polymerase I subunit 2</shortName>
        <ecNumber evidence="12 13 14">2.7.7.6</ecNumber>
    </recommendedName>
    <alternativeName>
        <fullName>DNA-directed RNA polymerase I 135 kDa polypeptide</fullName>
        <shortName>RPA135</shortName>
    </alternativeName>
</protein>
<proteinExistence type="evidence at protein level"/>
<gene>
    <name evidence="17 22" type="primary">POLR1B</name>
</gene>
<organism>
    <name type="scientific">Homo sapiens</name>
    <name type="common">Human</name>
    <dbReference type="NCBI Taxonomy" id="9606"/>
    <lineage>
        <taxon>Eukaryota</taxon>
        <taxon>Metazoa</taxon>
        <taxon>Chordata</taxon>
        <taxon>Craniata</taxon>
        <taxon>Vertebrata</taxon>
        <taxon>Euteleostomi</taxon>
        <taxon>Mammalia</taxon>
        <taxon>Eutheria</taxon>
        <taxon>Euarchontoglires</taxon>
        <taxon>Primates</taxon>
        <taxon>Haplorrhini</taxon>
        <taxon>Catarrhini</taxon>
        <taxon>Hominidae</taxon>
        <taxon>Homo</taxon>
    </lineage>
</organism>
<comment type="function">
    <text evidence="2 6 7 9 10 12 13 14">Catalytic core component of RNA polymerase I (Pol I), a DNA-dependent RNA polymerase which synthesizes ribosomal RNA precursors using the four ribonucleoside triphosphates as substrates. Transcribes 47S pre-rRNAs from multicopy rRNA gene clusters, giving rise to 5.8S, 18S and 28S ribosomal RNAs (PubMed:11250903, PubMed:11283244, PubMed:16858408, PubMed:34671025, PubMed:34887565, PubMed:36271492). Pol I-mediated transcription cycle proceeds through transcription initiation, transcription elongation and transcription termination stages. During transcription initiation, Pol I pre-initiation complex (PIC) is recruited by the selectivity factor 1 (SL1/TIF-IB) complex bound to the core promoter that precedes an rDNA repeat unit. The PIC assembly bends the promoter favoring the formation of the transcription bubble and promoter escape. Once the polymerase has escaped from the promoter it enters the elongation phase during which RNA is actively polymerized, based on complementarity with the template DNA strand. Highly processive, assembles in structures referred to as 'Miller trees' where many elongating Pol I complexes queue and transcribe the same rDNA coding regions. At terminator sequences downstream of the rDNA gene, PTRF interacts with Pol I and halts Pol I transcription leading to the release of the RNA transcript and polymerase from the DNA (PubMed:11250903, PubMed:11283244, PubMed:16858408, PubMed:34671025, PubMed:34887565, PubMed:36271492). Forms Pol I active center together with the largest subunit POLR1A/RPA1. Appends one nucleotide at a time to the 3' end of the nascent RNA, with POLR1A/RPA1 contributing a Mg(2+)-coordinating DxDGD motif, and POLR1B/RPA2 participating in the coordination of a second Mg(2+) ion and providing lysine residues believed to facilitate Watson-Crick base pairing between the incoming nucleotide and the template base. Typically, Mg(2+) ions direct a 5' nucleoside triphosphate to form a phosphodiester bond with the 3' hydroxyl of the preceding nucleotide of the nascent RNA, with the elimination of pyrophosphate. Has proofreading activity: Pauses and backtracks to allow the cleavage of a missincorporated nucleotide via POLR1H/RPA12. High Pol I processivity is associated with decreased transcription fidelity (By similarity) (PubMed:11250903, PubMed:11283244, PubMed:16809778, PubMed:16858408, PubMed:34671025, PubMed:34887565, PubMed:36271492).</text>
</comment>
<comment type="catalytic activity">
    <reaction evidence="9 12 13 14">
        <text>RNA(n) + a ribonucleoside 5'-triphosphate = RNA(n+1) + diphosphate</text>
        <dbReference type="Rhea" id="RHEA:21248"/>
        <dbReference type="Rhea" id="RHEA-COMP:14527"/>
        <dbReference type="Rhea" id="RHEA-COMP:17342"/>
        <dbReference type="ChEBI" id="CHEBI:33019"/>
        <dbReference type="ChEBI" id="CHEBI:61557"/>
        <dbReference type="ChEBI" id="CHEBI:140395"/>
        <dbReference type="EC" id="2.7.7.6"/>
    </reaction>
    <physiologicalReaction direction="left-to-right" evidence="9 12 13 14">
        <dbReference type="Rhea" id="RHEA:21249"/>
    </physiologicalReaction>
</comment>
<comment type="cofactor">
    <cofactor evidence="1 3">
        <name>Mg(2+)</name>
        <dbReference type="ChEBI" id="CHEBI:18420"/>
    </cofactor>
    <text evidence="1 3">Two Mg(2+) ions are coordinated by both the catalytic residues and the nucleic acid substrate to enhance substrate recognition and catalytic efficiency.</text>
</comment>
<comment type="subunit">
    <text evidence="6 7 9 10 12 13 14">Component of the RNA polymerase I (Pol I) complex consisting of 13 subunits: a ten-subunit catalytic core composed of POLR1A/RPA1, POLR1B/RPA2, POLR1C/RPAC1, POLR1D/RPAC2, POLR1H/RPA12, POLR2E/RPABC1, POLR2F/RPABC2, POLR2H/RPABC3, POLR2K/RPABC4 and POLR2L/RPABC5; a mobile stalk subunit POLR1F/RPA43 protruding from the core and additional subunits homologous to general transcription factors POLR1E/RPA49 and POLR1G/RPA34 (PubMed:16809778, PubMed:34671025, PubMed:34887565, PubMed:36271492). Part of Pol I pre-initiation complex (PIC), in which Pol I core assembles with RRN3 and promoter-bound UTBF and SL1/TIF-IB complex (PubMed:11250903, PubMed:11283244, PubMed:16809778, PubMed:16858408).</text>
</comment>
<comment type="interaction">
    <interactant intactId="EBI-355441">
        <id>Q9H9Y6</id>
    </interactant>
    <interactant intactId="EBI-359472">
        <id>O95602</id>
        <label>POLR1A</label>
    </interactant>
    <organismsDiffer>false</organismsDiffer>
    <experiments>4</experiments>
</comment>
<comment type="subcellular location">
    <subcellularLocation>
        <location evidence="20 21">Nucleus</location>
        <location evidence="20 21">Nucleolus</location>
    </subcellularLocation>
    <subcellularLocation>
        <location evidence="4">Chromosome</location>
    </subcellularLocation>
</comment>
<comment type="alternative products">
    <event type="alternative splicing"/>
    <isoform>
        <id>Q9H9Y6-1</id>
        <name>1</name>
        <sequence type="displayed"/>
    </isoform>
    <isoform>
        <id>Q9H9Y6-2</id>
        <name>2</name>
        <sequence type="described" ref="VSP_017823"/>
    </isoform>
    <isoform>
        <id>Q9H9Y6-3</id>
        <name>3</name>
        <sequence type="described" ref="VSP_056750"/>
    </isoform>
    <isoform>
        <id>Q9H9Y6-4</id>
        <name>4</name>
        <sequence type="described" ref="VSP_056749"/>
    </isoform>
    <isoform>
        <id>Q9H9Y6-5</id>
        <name>5</name>
        <sequence type="described" ref="VSP_056751"/>
    </isoform>
</comment>
<comment type="domain">
    <text evidence="18">The active site comprises the fork loops, the loops and the rudder that stabilize the transcription bubble and assist polymerase translocation.</text>
</comment>
<comment type="disease" evidence="11">
    <disease id="DI-05871">
        <name>Treacher Collins syndrome 4</name>
        <acronym>TCS4</acronym>
        <description>A form of Treacher Collins syndrome, a disorder of craniofacial development. Treacher Collins syndrome is characterized by a combination of bilateral downward slanting of the palpebral fissures, colobomas of the lower eyelids with a paucity of eyelashes medial to the defect, hypoplasia of the facial bones, cleft palate, malformation of the external ears, atresia of the external auditory canals, and bilateral conductive hearing loss. TCS4 inheritance pattern is autosomal dominant.</description>
        <dbReference type="MIM" id="618939"/>
    </disease>
    <text>The disease is caused by variants affecting the gene represented in this entry.</text>
</comment>
<comment type="similarity">
    <text evidence="19">Belongs to the RNA polymerase beta chain family.</text>
</comment>
<dbReference type="EC" id="2.7.7.6" evidence="12 13 14"/>
<dbReference type="EMBL" id="AK022533">
    <property type="protein sequence ID" value="BAB14082.1"/>
    <property type="molecule type" value="mRNA"/>
</dbReference>
<dbReference type="EMBL" id="AK022890">
    <property type="protein sequence ID" value="BAB14296.1"/>
    <property type="molecule type" value="mRNA"/>
</dbReference>
<dbReference type="EMBL" id="AK128044">
    <property type="protein sequence ID" value="BAC87247.1"/>
    <property type="molecule type" value="mRNA"/>
</dbReference>
<dbReference type="EMBL" id="AK301178">
    <property type="protein sequence ID" value="BAH13423.1"/>
    <property type="molecule type" value="mRNA"/>
</dbReference>
<dbReference type="EMBL" id="AK302814">
    <property type="protein sequence ID" value="BAH13809.1"/>
    <property type="molecule type" value="mRNA"/>
</dbReference>
<dbReference type="EMBL" id="AC012442">
    <property type="protein sequence ID" value="AAX81999.1"/>
    <property type="molecule type" value="Genomic_DNA"/>
</dbReference>
<dbReference type="EMBL" id="BC110833">
    <property type="protein sequence ID" value="AAI10834.1"/>
    <property type="molecule type" value="mRNA"/>
</dbReference>
<dbReference type="CCDS" id="CCDS2097.1">
    <molecule id="Q9H9Y6-1"/>
</dbReference>
<dbReference type="CCDS" id="CCDS46395.1">
    <molecule id="Q9H9Y6-2"/>
</dbReference>
<dbReference type="CCDS" id="CCDS62988.1">
    <molecule id="Q9H9Y6-3"/>
</dbReference>
<dbReference type="CCDS" id="CCDS62989.1">
    <molecule id="Q9H9Y6-5"/>
</dbReference>
<dbReference type="CCDS" id="CCDS62990.1">
    <molecule id="Q9H9Y6-4"/>
</dbReference>
<dbReference type="RefSeq" id="NP_001131076.1">
    <molecule id="Q9H9Y6-2"/>
    <property type="nucleotide sequence ID" value="NM_001137604.3"/>
</dbReference>
<dbReference type="RefSeq" id="NP_001269701.1">
    <molecule id="Q9H9Y6-3"/>
    <property type="nucleotide sequence ID" value="NM_001282772.2"/>
</dbReference>
<dbReference type="RefSeq" id="NP_001269703.1">
    <molecule id="Q9H9Y6-5"/>
    <property type="nucleotide sequence ID" value="NM_001282774.2"/>
</dbReference>
<dbReference type="RefSeq" id="NP_001269705.1">
    <molecule id="Q9H9Y6-4"/>
    <property type="nucleotide sequence ID" value="NM_001282776.2"/>
</dbReference>
<dbReference type="RefSeq" id="NP_001269706.1">
    <property type="nucleotide sequence ID" value="NM_001282777.1"/>
</dbReference>
<dbReference type="RefSeq" id="NP_001269708.1">
    <property type="nucleotide sequence ID" value="NM_001282779.1"/>
</dbReference>
<dbReference type="RefSeq" id="NP_001358900.1">
    <molecule id="Q9H9Y6-4"/>
    <property type="nucleotide sequence ID" value="NM_001371971.1"/>
</dbReference>
<dbReference type="RefSeq" id="NP_061887.2">
    <molecule id="Q9H9Y6-1"/>
    <property type="nucleotide sequence ID" value="NM_019014.5"/>
</dbReference>
<dbReference type="PDB" id="7OB9">
    <property type="method" value="EM"/>
    <property type="resolution" value="2.70 A"/>
    <property type="chains" value="B=1-1135"/>
</dbReference>
<dbReference type="PDB" id="7OBA">
    <property type="method" value="EM"/>
    <property type="resolution" value="3.10 A"/>
    <property type="chains" value="B=1-1135"/>
</dbReference>
<dbReference type="PDB" id="7OBB">
    <property type="method" value="EM"/>
    <property type="resolution" value="3.30 A"/>
    <property type="chains" value="B=1-1135"/>
</dbReference>
<dbReference type="PDB" id="7VBA">
    <property type="method" value="EM"/>
    <property type="resolution" value="2.89 A"/>
    <property type="chains" value="B=1-1135"/>
</dbReference>
<dbReference type="PDB" id="7VBB">
    <property type="method" value="EM"/>
    <property type="resolution" value="2.81 A"/>
    <property type="chains" value="B=1-1135"/>
</dbReference>
<dbReference type="PDB" id="7VBC">
    <property type="method" value="EM"/>
    <property type="resolution" value="3.01 A"/>
    <property type="chains" value="B=1-1135"/>
</dbReference>
<dbReference type="PDB" id="8A43">
    <property type="method" value="EM"/>
    <property type="resolution" value="4.09 A"/>
    <property type="chains" value="B=1-1135"/>
</dbReference>
<dbReference type="PDBsum" id="7OB9"/>
<dbReference type="PDBsum" id="7OBA"/>
<dbReference type="PDBsum" id="7OBB"/>
<dbReference type="PDBsum" id="7VBA"/>
<dbReference type="PDBsum" id="7VBB"/>
<dbReference type="PDBsum" id="7VBC"/>
<dbReference type="PDBsum" id="8A43"/>
<dbReference type="EMDB" id="EMD-12795"/>
<dbReference type="EMDB" id="EMD-12796"/>
<dbReference type="EMDB" id="EMD-12797"/>
<dbReference type="EMDB" id="EMD-15135"/>
<dbReference type="EMDB" id="EMD-31876"/>
<dbReference type="EMDB" id="EMD-31877"/>
<dbReference type="EMDB" id="EMD-31878"/>
<dbReference type="SMR" id="Q9H9Y6"/>
<dbReference type="BioGRID" id="123926">
    <property type="interactions" value="175"/>
</dbReference>
<dbReference type="ComplexPortal" id="CPX-2386">
    <property type="entry name" value="DNA-directed RNA polymerase I complex"/>
</dbReference>
<dbReference type="CORUM" id="Q9H9Y6"/>
<dbReference type="DIP" id="DIP-27538N"/>
<dbReference type="FunCoup" id="Q9H9Y6">
    <property type="interactions" value="2327"/>
</dbReference>
<dbReference type="IntAct" id="Q9H9Y6">
    <property type="interactions" value="63"/>
</dbReference>
<dbReference type="MINT" id="Q9H9Y6"/>
<dbReference type="STRING" id="9606.ENSP00000444136"/>
<dbReference type="GlyGen" id="Q9H9Y6">
    <property type="glycosylation" value="1 site, 1 O-linked glycan (1 site)"/>
</dbReference>
<dbReference type="iPTMnet" id="Q9H9Y6"/>
<dbReference type="PhosphoSitePlus" id="Q9H9Y6"/>
<dbReference type="SwissPalm" id="Q9H9Y6"/>
<dbReference type="BioMuta" id="POLR1B"/>
<dbReference type="DMDM" id="92090637"/>
<dbReference type="jPOST" id="Q9H9Y6"/>
<dbReference type="MassIVE" id="Q9H9Y6"/>
<dbReference type="PaxDb" id="9606-ENSP00000444136"/>
<dbReference type="PeptideAtlas" id="Q9H9Y6"/>
<dbReference type="ProteomicsDB" id="25159"/>
<dbReference type="ProteomicsDB" id="30108"/>
<dbReference type="ProteomicsDB" id="81369">
    <molecule id="Q9H9Y6-1"/>
</dbReference>
<dbReference type="ProteomicsDB" id="81370">
    <molecule id="Q9H9Y6-2"/>
</dbReference>
<dbReference type="Pumba" id="Q9H9Y6"/>
<dbReference type="Antibodypedia" id="18109">
    <property type="antibodies" value="126 antibodies from 25 providers"/>
</dbReference>
<dbReference type="DNASU" id="84172"/>
<dbReference type="Ensembl" id="ENST00000263331.10">
    <molecule id="Q9H9Y6-1"/>
    <property type="protein sequence ID" value="ENSP00000263331.5"/>
    <property type="gene ID" value="ENSG00000125630.16"/>
</dbReference>
<dbReference type="Ensembl" id="ENST00000409894.7">
    <molecule id="Q9H9Y6-5"/>
    <property type="protein sequence ID" value="ENSP00000387143.3"/>
    <property type="gene ID" value="ENSG00000125630.16"/>
</dbReference>
<dbReference type="Ensembl" id="ENST00000417433.6">
    <molecule id="Q9H9Y6-2"/>
    <property type="protein sequence ID" value="ENSP00000405358.2"/>
    <property type="gene ID" value="ENSG00000125630.16"/>
</dbReference>
<dbReference type="Ensembl" id="ENST00000537335.5">
    <molecule id="Q9H9Y6-4"/>
    <property type="protein sequence ID" value="ENSP00000437914.1"/>
    <property type="gene ID" value="ENSG00000125630.16"/>
</dbReference>
<dbReference type="Ensembl" id="ENST00000541869.5">
    <molecule id="Q9H9Y6-3"/>
    <property type="protein sequence ID" value="ENSP00000444136.1"/>
    <property type="gene ID" value="ENSG00000125630.16"/>
</dbReference>
<dbReference type="GeneID" id="84172"/>
<dbReference type="KEGG" id="hsa:84172"/>
<dbReference type="MANE-Select" id="ENST00000263331.10">
    <property type="protein sequence ID" value="ENSP00000263331.5"/>
    <property type="RefSeq nucleotide sequence ID" value="NM_019014.6"/>
    <property type="RefSeq protein sequence ID" value="NP_061887.2"/>
</dbReference>
<dbReference type="UCSC" id="uc002thw.4">
    <molecule id="Q9H9Y6-1"/>
    <property type="organism name" value="human"/>
</dbReference>
<dbReference type="AGR" id="HGNC:20454"/>
<dbReference type="CTD" id="84172"/>
<dbReference type="DisGeNET" id="84172"/>
<dbReference type="GeneCards" id="POLR1B"/>
<dbReference type="GeneReviews" id="POLR1B"/>
<dbReference type="HGNC" id="HGNC:20454">
    <property type="gene designation" value="POLR1B"/>
</dbReference>
<dbReference type="HPA" id="ENSG00000125630">
    <property type="expression patterns" value="Low tissue specificity"/>
</dbReference>
<dbReference type="MalaCards" id="POLR1B"/>
<dbReference type="MIM" id="602000">
    <property type="type" value="gene"/>
</dbReference>
<dbReference type="MIM" id="618939">
    <property type="type" value="phenotype"/>
</dbReference>
<dbReference type="neXtProt" id="NX_Q9H9Y6"/>
<dbReference type="OpenTargets" id="ENSG00000125630"/>
<dbReference type="Orphanet" id="861">
    <property type="disease" value="Treacher-Collins syndrome"/>
</dbReference>
<dbReference type="PharmGKB" id="PA130601182"/>
<dbReference type="VEuPathDB" id="HostDB:ENSG00000125630"/>
<dbReference type="eggNOG" id="KOG0216">
    <property type="taxonomic scope" value="Eukaryota"/>
</dbReference>
<dbReference type="GeneTree" id="ENSGT00950000183132"/>
<dbReference type="HOGENOM" id="CLU_000524_5_1_1"/>
<dbReference type="InParanoid" id="Q9H9Y6"/>
<dbReference type="OMA" id="FFGVVHY"/>
<dbReference type="OrthoDB" id="10248617at2759"/>
<dbReference type="PAN-GO" id="Q9H9Y6">
    <property type="GO annotations" value="2 GO annotations based on evolutionary models"/>
</dbReference>
<dbReference type="PhylomeDB" id="Q9H9Y6"/>
<dbReference type="TreeFam" id="TF103055"/>
<dbReference type="PathwayCommons" id="Q9H9Y6"/>
<dbReference type="Reactome" id="R-HSA-427413">
    <property type="pathway name" value="NoRC negatively regulates rRNA expression"/>
</dbReference>
<dbReference type="Reactome" id="R-HSA-5250924">
    <property type="pathway name" value="B-WICH complex positively regulates rRNA expression"/>
</dbReference>
<dbReference type="Reactome" id="R-HSA-73762">
    <property type="pathway name" value="RNA Polymerase I Transcription Initiation"/>
</dbReference>
<dbReference type="Reactome" id="R-HSA-73772">
    <property type="pathway name" value="RNA Polymerase I Promoter Escape"/>
</dbReference>
<dbReference type="Reactome" id="R-HSA-73863">
    <property type="pathway name" value="RNA Polymerase I Transcription Termination"/>
</dbReference>
<dbReference type="SignaLink" id="Q9H9Y6"/>
<dbReference type="SIGNOR" id="Q9H9Y6"/>
<dbReference type="BioGRID-ORCS" id="84172">
    <property type="hits" value="815 hits in 1146 CRISPR screens"/>
</dbReference>
<dbReference type="CD-CODE" id="91857CE7">
    <property type="entry name" value="Nucleolus"/>
</dbReference>
<dbReference type="ChiTaRS" id="POLR1B">
    <property type="organism name" value="human"/>
</dbReference>
<dbReference type="GeneWiki" id="POLR1B"/>
<dbReference type="GenomeRNAi" id="84172"/>
<dbReference type="Pharos" id="Q9H9Y6">
    <property type="development level" value="Tbio"/>
</dbReference>
<dbReference type="PRO" id="PR:Q9H9Y6"/>
<dbReference type="Proteomes" id="UP000005640">
    <property type="component" value="Chromosome 2"/>
</dbReference>
<dbReference type="RNAct" id="Q9H9Y6">
    <property type="molecule type" value="protein"/>
</dbReference>
<dbReference type="Bgee" id="ENSG00000125630">
    <property type="expression patterns" value="Expressed in buccal mucosa cell and 207 other cell types or tissues"/>
</dbReference>
<dbReference type="ExpressionAtlas" id="Q9H9Y6">
    <property type="expression patterns" value="baseline and differential"/>
</dbReference>
<dbReference type="GO" id="GO:0005694">
    <property type="term" value="C:chromosome"/>
    <property type="evidence" value="ECO:0000250"/>
    <property type="project" value="UniProtKB"/>
</dbReference>
<dbReference type="GO" id="GO:0005829">
    <property type="term" value="C:cytosol"/>
    <property type="evidence" value="ECO:0000314"/>
    <property type="project" value="HPA"/>
</dbReference>
<dbReference type="GO" id="GO:0001650">
    <property type="term" value="C:fibrillar center"/>
    <property type="evidence" value="ECO:0000314"/>
    <property type="project" value="HPA"/>
</dbReference>
<dbReference type="GO" id="GO:0005739">
    <property type="term" value="C:mitochondrion"/>
    <property type="evidence" value="ECO:0007669"/>
    <property type="project" value="GOC"/>
</dbReference>
<dbReference type="GO" id="GO:0005654">
    <property type="term" value="C:nucleoplasm"/>
    <property type="evidence" value="ECO:0000304"/>
    <property type="project" value="Reactome"/>
</dbReference>
<dbReference type="GO" id="GO:0005736">
    <property type="term" value="C:RNA polymerase I complex"/>
    <property type="evidence" value="ECO:0000314"/>
    <property type="project" value="UniProtKB"/>
</dbReference>
<dbReference type="GO" id="GO:0003677">
    <property type="term" value="F:DNA binding"/>
    <property type="evidence" value="ECO:0007669"/>
    <property type="project" value="InterPro"/>
</dbReference>
<dbReference type="GO" id="GO:0003899">
    <property type="term" value="F:DNA-directed RNA polymerase activity"/>
    <property type="evidence" value="ECO:0000314"/>
    <property type="project" value="UniProtKB"/>
</dbReference>
<dbReference type="GO" id="GO:0071667">
    <property type="term" value="F:DNA/RNA hybrid binding"/>
    <property type="evidence" value="ECO:0000314"/>
    <property type="project" value="UniProtKB"/>
</dbReference>
<dbReference type="GO" id="GO:0032549">
    <property type="term" value="F:ribonucleoside binding"/>
    <property type="evidence" value="ECO:0007669"/>
    <property type="project" value="InterPro"/>
</dbReference>
<dbReference type="GO" id="GO:0008270">
    <property type="term" value="F:zinc ion binding"/>
    <property type="evidence" value="ECO:0000314"/>
    <property type="project" value="UniProtKB"/>
</dbReference>
<dbReference type="GO" id="GO:0007566">
    <property type="term" value="P:embryo implantation"/>
    <property type="evidence" value="ECO:0007669"/>
    <property type="project" value="Ensembl"/>
</dbReference>
<dbReference type="GO" id="GO:0014029">
    <property type="term" value="P:neural crest formation"/>
    <property type="evidence" value="ECO:0000250"/>
    <property type="project" value="UniProtKB"/>
</dbReference>
<dbReference type="GO" id="GO:0017126">
    <property type="term" value="P:nucleologenesis"/>
    <property type="evidence" value="ECO:0007669"/>
    <property type="project" value="Ensembl"/>
</dbReference>
<dbReference type="GO" id="GO:0009303">
    <property type="term" value="P:rRNA transcription"/>
    <property type="evidence" value="ECO:0007669"/>
    <property type="project" value="Ensembl"/>
</dbReference>
<dbReference type="CDD" id="cd00653">
    <property type="entry name" value="RNA_pol_B_RPB2"/>
    <property type="match status" value="1"/>
</dbReference>
<dbReference type="FunFam" id="2.40.270.10:FF:000006">
    <property type="entry name" value="DNA-directed RNA polymerase subunit beta"/>
    <property type="match status" value="1"/>
</dbReference>
<dbReference type="FunFam" id="2.40.270.10:FF:000011">
    <property type="entry name" value="DNA-directed RNA polymerase subunit beta"/>
    <property type="match status" value="1"/>
</dbReference>
<dbReference type="FunFam" id="2.40.50.150:FF:000004">
    <property type="entry name" value="DNA-directed RNA polymerase subunit beta"/>
    <property type="match status" value="1"/>
</dbReference>
<dbReference type="FunFam" id="3.90.1070.20:FF:000003">
    <property type="entry name" value="DNA-directed RNA polymerase subunit beta"/>
    <property type="match status" value="1"/>
</dbReference>
<dbReference type="FunFam" id="3.90.1100.10:FF:000008">
    <property type="entry name" value="DNA-directed RNA polymerase subunit beta"/>
    <property type="match status" value="1"/>
</dbReference>
<dbReference type="FunFam" id="3.90.1100.10:FF:000016">
    <property type="entry name" value="DNA-directed RNA polymerase subunit beta"/>
    <property type="match status" value="1"/>
</dbReference>
<dbReference type="FunFam" id="3.90.1110.10:FF:000008">
    <property type="entry name" value="DNA-directed RNA polymerase subunit beta"/>
    <property type="match status" value="1"/>
</dbReference>
<dbReference type="FunFam" id="3.90.1800.10:FF:000004">
    <property type="entry name" value="DNA-directed RNA polymerase subunit beta"/>
    <property type="match status" value="1"/>
</dbReference>
<dbReference type="Gene3D" id="2.40.50.150">
    <property type="match status" value="1"/>
</dbReference>
<dbReference type="Gene3D" id="3.90.1070.20">
    <property type="match status" value="1"/>
</dbReference>
<dbReference type="Gene3D" id="3.90.1100.10">
    <property type="match status" value="1"/>
</dbReference>
<dbReference type="Gene3D" id="2.40.270.10">
    <property type="entry name" value="DNA-directed RNA polymerase, subunit 2, domain 6"/>
    <property type="match status" value="1"/>
</dbReference>
<dbReference type="Gene3D" id="3.90.1800.10">
    <property type="entry name" value="RNA polymerase alpha subunit dimerisation domain"/>
    <property type="match status" value="1"/>
</dbReference>
<dbReference type="Gene3D" id="3.90.1110.10">
    <property type="entry name" value="RNA polymerase Rpb2, domain 2"/>
    <property type="match status" value="1"/>
</dbReference>
<dbReference type="InterPro" id="IPR015712">
    <property type="entry name" value="DNA-dir_RNA_pol_su2"/>
</dbReference>
<dbReference type="InterPro" id="IPR007120">
    <property type="entry name" value="DNA-dir_RNAP_su2_dom"/>
</dbReference>
<dbReference type="InterPro" id="IPR037033">
    <property type="entry name" value="DNA-dir_RNAP_su2_hyb_sf"/>
</dbReference>
<dbReference type="InterPro" id="IPR007121">
    <property type="entry name" value="RNA_pol_bsu_CS"/>
</dbReference>
<dbReference type="InterPro" id="IPR007644">
    <property type="entry name" value="RNA_pol_bsu_protrusion"/>
</dbReference>
<dbReference type="InterPro" id="IPR007642">
    <property type="entry name" value="RNA_pol_Rpb2_2"/>
</dbReference>
<dbReference type="InterPro" id="IPR037034">
    <property type="entry name" value="RNA_pol_Rpb2_2_sf"/>
</dbReference>
<dbReference type="InterPro" id="IPR007645">
    <property type="entry name" value="RNA_pol_Rpb2_3"/>
</dbReference>
<dbReference type="InterPro" id="IPR007641">
    <property type="entry name" value="RNA_pol_Rpb2_7"/>
</dbReference>
<dbReference type="InterPro" id="IPR014724">
    <property type="entry name" value="RNA_pol_RPB2_OB-fold"/>
</dbReference>
<dbReference type="InterPro" id="IPR009674">
    <property type="entry name" value="Rpa2_dom_4"/>
</dbReference>
<dbReference type="PANTHER" id="PTHR20856">
    <property type="entry name" value="DNA-DIRECTED RNA POLYMERASE I SUBUNIT 2"/>
    <property type="match status" value="1"/>
</dbReference>
<dbReference type="Pfam" id="PF06883">
    <property type="entry name" value="RNA_pol_Rpa2_4"/>
    <property type="match status" value="1"/>
</dbReference>
<dbReference type="Pfam" id="PF04563">
    <property type="entry name" value="RNA_pol_Rpb2_1"/>
    <property type="match status" value="1"/>
</dbReference>
<dbReference type="Pfam" id="PF04561">
    <property type="entry name" value="RNA_pol_Rpb2_2"/>
    <property type="match status" value="1"/>
</dbReference>
<dbReference type="Pfam" id="PF04565">
    <property type="entry name" value="RNA_pol_Rpb2_3"/>
    <property type="match status" value="1"/>
</dbReference>
<dbReference type="Pfam" id="PF00562">
    <property type="entry name" value="RNA_pol_Rpb2_6"/>
    <property type="match status" value="1"/>
</dbReference>
<dbReference type="Pfam" id="PF04560">
    <property type="entry name" value="RNA_pol_Rpb2_7"/>
    <property type="match status" value="1"/>
</dbReference>
<dbReference type="SUPFAM" id="SSF64484">
    <property type="entry name" value="beta and beta-prime subunits of DNA dependent RNA-polymerase"/>
    <property type="match status" value="1"/>
</dbReference>
<dbReference type="PROSITE" id="PS01166">
    <property type="entry name" value="RNA_POL_BETA"/>
    <property type="match status" value="1"/>
</dbReference>
<reference key="1">
    <citation type="journal article" date="2004" name="Nat. Genet.">
        <title>Complete sequencing and characterization of 21,243 full-length human cDNAs.</title>
        <authorList>
            <person name="Ota T."/>
            <person name="Suzuki Y."/>
            <person name="Nishikawa T."/>
            <person name="Otsuki T."/>
            <person name="Sugiyama T."/>
            <person name="Irie R."/>
            <person name="Wakamatsu A."/>
            <person name="Hayashi K."/>
            <person name="Sato H."/>
            <person name="Nagai K."/>
            <person name="Kimura K."/>
            <person name="Makita H."/>
            <person name="Sekine M."/>
            <person name="Obayashi M."/>
            <person name="Nishi T."/>
            <person name="Shibahara T."/>
            <person name="Tanaka T."/>
            <person name="Ishii S."/>
            <person name="Yamamoto J."/>
            <person name="Saito K."/>
            <person name="Kawai Y."/>
            <person name="Isono Y."/>
            <person name="Nakamura Y."/>
            <person name="Nagahari K."/>
            <person name="Murakami K."/>
            <person name="Yasuda T."/>
            <person name="Iwayanagi T."/>
            <person name="Wagatsuma M."/>
            <person name="Shiratori A."/>
            <person name="Sudo H."/>
            <person name="Hosoiri T."/>
            <person name="Kaku Y."/>
            <person name="Kodaira H."/>
            <person name="Kondo H."/>
            <person name="Sugawara M."/>
            <person name="Takahashi M."/>
            <person name="Kanda K."/>
            <person name="Yokoi T."/>
            <person name="Furuya T."/>
            <person name="Kikkawa E."/>
            <person name="Omura Y."/>
            <person name="Abe K."/>
            <person name="Kamihara K."/>
            <person name="Katsuta N."/>
            <person name="Sato K."/>
            <person name="Tanikawa M."/>
            <person name="Yamazaki M."/>
            <person name="Ninomiya K."/>
            <person name="Ishibashi T."/>
            <person name="Yamashita H."/>
            <person name="Murakawa K."/>
            <person name="Fujimori K."/>
            <person name="Tanai H."/>
            <person name="Kimata M."/>
            <person name="Watanabe M."/>
            <person name="Hiraoka S."/>
            <person name="Chiba Y."/>
            <person name="Ishida S."/>
            <person name="Ono Y."/>
            <person name="Takiguchi S."/>
            <person name="Watanabe S."/>
            <person name="Yosida M."/>
            <person name="Hotuta T."/>
            <person name="Kusano J."/>
            <person name="Kanehori K."/>
            <person name="Takahashi-Fujii A."/>
            <person name="Hara H."/>
            <person name="Tanase T.-O."/>
            <person name="Nomura Y."/>
            <person name="Togiya S."/>
            <person name="Komai F."/>
            <person name="Hara R."/>
            <person name="Takeuchi K."/>
            <person name="Arita M."/>
            <person name="Imose N."/>
            <person name="Musashino K."/>
            <person name="Yuuki H."/>
            <person name="Oshima A."/>
            <person name="Sasaki N."/>
            <person name="Aotsuka S."/>
            <person name="Yoshikawa Y."/>
            <person name="Matsunawa H."/>
            <person name="Ichihara T."/>
            <person name="Shiohata N."/>
            <person name="Sano S."/>
            <person name="Moriya S."/>
            <person name="Momiyama H."/>
            <person name="Satoh N."/>
            <person name="Takami S."/>
            <person name="Terashima Y."/>
            <person name="Suzuki O."/>
            <person name="Nakagawa S."/>
            <person name="Senoh A."/>
            <person name="Mizoguchi H."/>
            <person name="Goto Y."/>
            <person name="Shimizu F."/>
            <person name="Wakebe H."/>
            <person name="Hishigaki H."/>
            <person name="Watanabe T."/>
            <person name="Sugiyama A."/>
            <person name="Takemoto M."/>
            <person name="Kawakami B."/>
            <person name="Yamazaki M."/>
            <person name="Watanabe K."/>
            <person name="Kumagai A."/>
            <person name="Itakura S."/>
            <person name="Fukuzumi Y."/>
            <person name="Fujimori Y."/>
            <person name="Komiyama M."/>
            <person name="Tashiro H."/>
            <person name="Tanigami A."/>
            <person name="Fujiwara T."/>
            <person name="Ono T."/>
            <person name="Yamada K."/>
            <person name="Fujii Y."/>
            <person name="Ozaki K."/>
            <person name="Hirao M."/>
            <person name="Ohmori Y."/>
            <person name="Kawabata A."/>
            <person name="Hikiji T."/>
            <person name="Kobatake N."/>
            <person name="Inagaki H."/>
            <person name="Ikema Y."/>
            <person name="Okamoto S."/>
            <person name="Okitani R."/>
            <person name="Kawakami T."/>
            <person name="Noguchi S."/>
            <person name="Itoh T."/>
            <person name="Shigeta K."/>
            <person name="Senba T."/>
            <person name="Matsumura K."/>
            <person name="Nakajima Y."/>
            <person name="Mizuno T."/>
            <person name="Morinaga M."/>
            <person name="Sasaki M."/>
            <person name="Togashi T."/>
            <person name="Oyama M."/>
            <person name="Hata H."/>
            <person name="Watanabe M."/>
            <person name="Komatsu T."/>
            <person name="Mizushima-Sugano J."/>
            <person name="Satoh T."/>
            <person name="Shirai Y."/>
            <person name="Takahashi Y."/>
            <person name="Nakagawa K."/>
            <person name="Okumura K."/>
            <person name="Nagase T."/>
            <person name="Nomura N."/>
            <person name="Kikuchi H."/>
            <person name="Masuho Y."/>
            <person name="Yamashita R."/>
            <person name="Nakai K."/>
            <person name="Yada T."/>
            <person name="Nakamura Y."/>
            <person name="Ohara O."/>
            <person name="Isogai T."/>
            <person name="Sugano S."/>
        </authorList>
    </citation>
    <scope>NUCLEOTIDE SEQUENCE [LARGE SCALE MRNA] (ISOFORMS 1; 2; 3 AND 4)</scope>
    <scope>VARIANTS LEU-295 AND ARG-887 (ISOFORM 4)</scope>
    <source>
        <tissue>Spleen</tissue>
        <tissue>Testis</tissue>
    </source>
</reference>
<reference key="2">
    <citation type="journal article" date="2005" name="Nature">
        <title>Generation and annotation of the DNA sequences of human chromosomes 2 and 4.</title>
        <authorList>
            <person name="Hillier L.W."/>
            <person name="Graves T.A."/>
            <person name="Fulton R.S."/>
            <person name="Fulton L.A."/>
            <person name="Pepin K.H."/>
            <person name="Minx P."/>
            <person name="Wagner-McPherson C."/>
            <person name="Layman D."/>
            <person name="Wylie K."/>
            <person name="Sekhon M."/>
            <person name="Becker M.C."/>
            <person name="Fewell G.A."/>
            <person name="Delehaunty K.D."/>
            <person name="Miner T.L."/>
            <person name="Nash W.E."/>
            <person name="Kremitzki C."/>
            <person name="Oddy L."/>
            <person name="Du H."/>
            <person name="Sun H."/>
            <person name="Bradshaw-Cordum H."/>
            <person name="Ali J."/>
            <person name="Carter J."/>
            <person name="Cordes M."/>
            <person name="Harris A."/>
            <person name="Isak A."/>
            <person name="van Brunt A."/>
            <person name="Nguyen C."/>
            <person name="Du F."/>
            <person name="Courtney L."/>
            <person name="Kalicki J."/>
            <person name="Ozersky P."/>
            <person name="Abbott S."/>
            <person name="Armstrong J."/>
            <person name="Belter E.A."/>
            <person name="Caruso L."/>
            <person name="Cedroni M."/>
            <person name="Cotton M."/>
            <person name="Davidson T."/>
            <person name="Desai A."/>
            <person name="Elliott G."/>
            <person name="Erb T."/>
            <person name="Fronick C."/>
            <person name="Gaige T."/>
            <person name="Haakenson W."/>
            <person name="Haglund K."/>
            <person name="Holmes A."/>
            <person name="Harkins R."/>
            <person name="Kim K."/>
            <person name="Kruchowski S.S."/>
            <person name="Strong C.M."/>
            <person name="Grewal N."/>
            <person name="Goyea E."/>
            <person name="Hou S."/>
            <person name="Levy A."/>
            <person name="Martinka S."/>
            <person name="Mead K."/>
            <person name="McLellan M.D."/>
            <person name="Meyer R."/>
            <person name="Randall-Maher J."/>
            <person name="Tomlinson C."/>
            <person name="Dauphin-Kohlberg S."/>
            <person name="Kozlowicz-Reilly A."/>
            <person name="Shah N."/>
            <person name="Swearengen-Shahid S."/>
            <person name="Snider J."/>
            <person name="Strong J.T."/>
            <person name="Thompson J."/>
            <person name="Yoakum M."/>
            <person name="Leonard S."/>
            <person name="Pearman C."/>
            <person name="Trani L."/>
            <person name="Radionenko M."/>
            <person name="Waligorski J.E."/>
            <person name="Wang C."/>
            <person name="Rock S.M."/>
            <person name="Tin-Wollam A.-M."/>
            <person name="Maupin R."/>
            <person name="Latreille P."/>
            <person name="Wendl M.C."/>
            <person name="Yang S.-P."/>
            <person name="Pohl C."/>
            <person name="Wallis J.W."/>
            <person name="Spieth J."/>
            <person name="Bieri T.A."/>
            <person name="Berkowicz N."/>
            <person name="Nelson J.O."/>
            <person name="Osborne J."/>
            <person name="Ding L."/>
            <person name="Meyer R."/>
            <person name="Sabo A."/>
            <person name="Shotland Y."/>
            <person name="Sinha P."/>
            <person name="Wohldmann P.E."/>
            <person name="Cook L.L."/>
            <person name="Hickenbotham M.T."/>
            <person name="Eldred J."/>
            <person name="Williams D."/>
            <person name="Jones T.A."/>
            <person name="She X."/>
            <person name="Ciccarelli F.D."/>
            <person name="Izaurralde E."/>
            <person name="Taylor J."/>
            <person name="Schmutz J."/>
            <person name="Myers R.M."/>
            <person name="Cox D.R."/>
            <person name="Huang X."/>
            <person name="McPherson J.D."/>
            <person name="Mardis E.R."/>
            <person name="Clifton S.W."/>
            <person name="Warren W.C."/>
            <person name="Chinwalla A.T."/>
            <person name="Eddy S.R."/>
            <person name="Marra M.A."/>
            <person name="Ovcharenko I."/>
            <person name="Furey T.S."/>
            <person name="Miller W."/>
            <person name="Eichler E.E."/>
            <person name="Bork P."/>
            <person name="Suyama M."/>
            <person name="Torrents D."/>
            <person name="Waterston R.H."/>
            <person name="Wilson R.K."/>
        </authorList>
    </citation>
    <scope>NUCLEOTIDE SEQUENCE [LARGE SCALE GENOMIC DNA]</scope>
</reference>
<reference key="3">
    <citation type="journal article" date="2004" name="Genome Res.">
        <title>The status, quality, and expansion of the NIH full-length cDNA project: the Mammalian Gene Collection (MGC).</title>
        <authorList>
            <consortium name="The MGC Project Team"/>
        </authorList>
    </citation>
    <scope>NUCLEOTIDE SEQUENCE [LARGE SCALE MRNA] (ISOFORM 5)</scope>
    <scope>VARIANT LEU-295</scope>
    <source>
        <tissue>Pancreas</tissue>
    </source>
</reference>
<reference key="4">
    <citation type="journal article" date="2001" name="EMBO J.">
        <title>hRRN3 is essential in the SL1-mediated recruitment of RNA polymerase I to rRNA gene promoters.</title>
        <authorList>
            <person name="Miller G."/>
            <person name="Panov K.I."/>
            <person name="Friedrich J.K."/>
            <person name="Trinkle-Mulcahy L."/>
            <person name="Lamond A.I."/>
            <person name="Zomerdijk J.C.B.M."/>
        </authorList>
    </citation>
    <scope>FUNCTION OF POL I PIC</scope>
    <scope>SUBUNIT</scope>
</reference>
<reference key="5">
    <citation type="journal article" date="2001" name="Mol. Cell. Biol.">
        <title>A step subsequent to preinitiation complex assembly at the ribosomal RNA gene promoter is rate limiting for human RNA polymerase I-dependent transcription.</title>
        <authorList>
            <person name="Panov K.I."/>
            <person name="Friedrich J.K."/>
            <person name="Zomerdijk J.C."/>
        </authorList>
    </citation>
    <scope>FUNCTION OF POL I PIC</scope>
    <scope>SUBUNIT</scope>
</reference>
<reference key="6">
    <citation type="journal article" date="2006" name="EMBO J.">
        <title>UBF activates RNA polymerase I transcription by stimulating promoter escape.</title>
        <authorList>
            <person name="Panov K.I."/>
            <person name="Friedrich J.K."/>
            <person name="Russell J."/>
            <person name="Zomerdijk J.C."/>
        </authorList>
    </citation>
    <scope>FUNCTION OF POL I PIC</scope>
    <scope>SUBUNIT</scope>
</reference>
<reference key="7">
    <citation type="journal article" date="2006" name="Mol. Cell. Biol.">
        <title>RNA polymerase I-specific subunit CAST/hPAF49 has a role in the activation of transcription by upstream binding factor.</title>
        <authorList>
            <person name="Panov K.I."/>
            <person name="Panova T.B."/>
            <person name="Gadal O."/>
            <person name="Nishiyama K."/>
            <person name="Saito T."/>
            <person name="Russell J."/>
            <person name="Zomerdijk J.C.B.M."/>
        </authorList>
    </citation>
    <scope>IDENTIFICATION IN THE RNA POL I COMPLEX</scope>
    <scope>FUNCTION</scope>
    <scope>CATALYTIC ACTIVITY</scope>
</reference>
<reference key="8">
    <citation type="journal article" date="2011" name="BMC Syst. Biol.">
        <title>Initial characterization of the human central proteome.</title>
        <authorList>
            <person name="Burkard T.R."/>
            <person name="Planyavsky M."/>
            <person name="Kaupe I."/>
            <person name="Breitwieser F.P."/>
            <person name="Buerckstuemmer T."/>
            <person name="Bennett K.L."/>
            <person name="Superti-Furga G."/>
            <person name="Colinge J."/>
        </authorList>
    </citation>
    <scope>IDENTIFICATION BY MASS SPECTROMETRY [LARGE SCALE ANALYSIS]</scope>
</reference>
<reference key="9">
    <citation type="journal article" date="2013" name="J. Proteome Res.">
        <title>Toward a comprehensive characterization of a human cancer cell phosphoproteome.</title>
        <authorList>
            <person name="Zhou H."/>
            <person name="Di Palma S."/>
            <person name="Preisinger C."/>
            <person name="Peng M."/>
            <person name="Polat A.N."/>
            <person name="Heck A.J."/>
            <person name="Mohammed S."/>
        </authorList>
    </citation>
    <scope>PHOSPHORYLATION [LARGE SCALE ANALYSIS] AT SER-1051</scope>
    <scope>IDENTIFICATION BY MASS SPECTROMETRY [LARGE SCALE ANALYSIS]</scope>
    <source>
        <tissue>Erythroleukemia</tissue>
    </source>
</reference>
<reference key="10">
    <citation type="journal article" date="2021" name="Cell Discov.">
        <title>Structure of the human RNA polymerase I elongation complex.</title>
        <authorList>
            <person name="Zhao D."/>
            <person name="Liu W."/>
            <person name="Chen K."/>
            <person name="Wu Z."/>
            <person name="Yang H."/>
            <person name="Xu Y."/>
        </authorList>
    </citation>
    <scope>STRUCTURE BY ELECTRON MICROSCOPY (2.81 ANGSTROMS) OF 1-1719 IN COMPLEX WITH DNA-RNA HYBRID AND ZN(2+)</scope>
    <scope>FUNCTION</scope>
    <scope>CATALYTIC ACTIVITY</scope>
    <scope>SUBUNIT</scope>
    <scope>DOMAIN</scope>
    <scope>SITE</scope>
</reference>
<reference key="11">
    <citation type="journal article" date="2021" name="Nat. Struct. Mol. Biol.">
        <title>Cryo-EM structures of human RNA polymerase I.</title>
        <authorList>
            <person name="Misiaszek A.D."/>
            <person name="Girbig M."/>
            <person name="Grotsch H."/>
            <person name="Baudin F."/>
            <person name="Murciano B."/>
            <person name="Lafita A."/>
            <person name="Muller C.W."/>
        </authorList>
    </citation>
    <scope>STRUCTURE BY ELECTRON MICROSCOPY (2.70 ANGSTROMS) IN COMPLEX WITH DNA-RNA HYBRID AND ZN(2+)</scope>
    <scope>FUNCTION OF POL I</scope>
    <scope>SUBUNIT</scope>
    <scope>SUBCELLULAR LOCATION</scope>
</reference>
<reference key="12">
    <citation type="journal article" date="2022" name="Life. Sci Alliance">
        <title>The human RNA polymerase I structure reveals an HMG-like docking domain specific to metazoans.</title>
        <authorList>
            <person name="Daiss J.L."/>
            <person name="Pilsl M."/>
            <person name="Straub K."/>
            <person name="Bleckmann A."/>
            <person name="Hocherl M."/>
            <person name="Heiss F.B."/>
            <person name="Abascal-Palacios G."/>
            <person name="Ramsay E.P."/>
            <person name="Tluckova K."/>
            <person name="Mars J.C."/>
            <person name="Furtges T."/>
            <person name="Bruckmann A."/>
            <person name="Rudack T."/>
            <person name="Bernecky C."/>
            <person name="Lamour V."/>
            <person name="Panov K."/>
            <person name="Vannini A."/>
            <person name="Moss T."/>
            <person name="Engel C."/>
        </authorList>
    </citation>
    <scope>STRUCTURE BY ELECTRON MICROSCOPY (4.09 ANGSTROMS)</scope>
    <scope>FUNCTION</scope>
    <scope>CATALYTIC ACTIVITY</scope>
    <scope>SUBUNIT</scope>
    <scope>SUBCELLULAR LOCATION</scope>
</reference>
<reference key="13">
    <citation type="journal article" date="2020" name="Genet. Med.">
        <title>POLR1B and neural crest cell anomalies in Treacher Collins syndrome type 4.</title>
        <authorList>
            <person name="Sanchez E."/>
            <person name="Laplace-Builhe B."/>
            <person name="Mau-Them F.T."/>
            <person name="Richard E."/>
            <person name="Goldenberg A."/>
            <person name="Toler T.L."/>
            <person name="Guignard T."/>
            <person name="Gatinois V."/>
            <person name="Vincent M."/>
            <person name="Blanchet C."/>
            <person name="Boland A."/>
            <person name="Bihoreau M.T."/>
            <person name="Deleuze J.F."/>
            <person name="Olaso R."/>
            <person name="Nephi W."/>
            <person name="Luedecke H.J."/>
            <person name="Verheij J.B.G.M."/>
            <person name="Moreau-Lenoir F."/>
            <person name="Denoyelle F."/>
            <person name="Riviere J.B."/>
            <person name="Laplanche J.L."/>
            <person name="Willing M."/>
            <person name="Captier G."/>
            <person name="Apparailly F."/>
            <person name="Wieczorek D."/>
            <person name="Collet C."/>
            <person name="Djouad F."/>
            <person name="Genevieve D."/>
        </authorList>
    </citation>
    <scope>INVOLVEMENT IN TCS4</scope>
    <scope>VARIANTS TCS4 ARG-682; CYS-1003 AND SER-1003</scope>
</reference>
<name>RPA2_HUMAN</name>
<sequence>MDPGSRWRNLPSGPSLKHLTDPSYGIPREQQKAALQELTRAHVESFNYAVHEGLGLAVQAIPPFEFAFKDERISFTILDAVISPPTVPKGTICKEANVYPAECRGRRSTYRGKLTADINWAVNGISKGIIKQFLGYVPIMVKSKLCNLRNLPPQALIEHHEEAEEMGGYFIINGIEKVIRMLIMPRRNFPIAMIRPKWKTRGPGYTQYGVSMHCVREEHSAVNMNLHYLENGTVMLNFIYRKELFFLPLGFALKALVSFSDYQIFQELIKGKEDDSFLRNSVSQMLRIVMEEGCSTQKQVLNYLGECFRVKLNVPDWYPNEQAAEFLFNQCICIHLKSNTEKFYMLCLMTRKLFALAKGECMEDNPDSLVNQEVLTPGQLFLMFLKEKLEGWLVSIKIAFDKKAQKTSVSMNTDNLMRIFTMGIDLTKPFEYLFATGNLRSKTGLGLLQDSGLCVVADKLNFIRYLSHFRCVHRGADFAKMRTTTVRRLLPESWGFLCPVHTPDGEPCGLMNHLTAVCEVVTQFVYTASIPALLCNLGVTPIDGAPHRSYSECYPVLLDGVMVGWVDKDLAPGIADSLRHFKVLREKRIPPWMEVVLIPMTGKPSLYPGLFLFTTPCRLVRPVQNLALGKEELIGTMEQIFMNVAIFEDEVFAGVTTHQELFPHSLLSVIANFIPFSDHNQSPRNMYQCQMGKQTMGFPLLTYQDRSDNKLYRLQTPQSPLVRPSMYDYYDMDNYPIGTNAIVAVISYTGYDMEDAMIVNKASWERGFAHGSVYKSEFIDLSEKIKQGDSSLVFGIKPGDPRVLQKLDDDGLPFIGAKLQYGDPYYSYLNLNTGESFVMYYKSKENCVVDNIKVCSNDTGSGKFKCVCITMRVPRNPTIGDKFASRHGQKGILSRLWPAEDMPFTESGMVPDILFNPHGFPSRMTIGMLIESMAGKSAALHGLCHDATPFIFSEENSALEYFGEMLKAAGYNFYGTERLYSGISGLELEADIFIGVVYYQRLRHMVSDKFQVRTTGARDRVTNQPIGGRNVQGGIRFGEMERDALLAHGTSFLLHDRLFNCSDRSVAHVCVKCGSLLSPLLEKPPPSWSAMRNRKYNCTLCSRSDTIDTVSVPYVFRYFVAELAAMNIKVKLDVV</sequence>
<evidence type="ECO:0000250" key="1">
    <source>
        <dbReference type="UniProtKB" id="P08518"/>
    </source>
</evidence>
<evidence type="ECO:0000250" key="2">
    <source>
        <dbReference type="UniProtKB" id="P10964"/>
    </source>
</evidence>
<evidence type="ECO:0000250" key="3">
    <source>
        <dbReference type="UniProtKB" id="P30876"/>
    </source>
</evidence>
<evidence type="ECO:0000250" key="4">
    <source>
        <dbReference type="UniProtKB" id="P70700"/>
    </source>
</evidence>
<evidence type="ECO:0000256" key="5">
    <source>
        <dbReference type="SAM" id="MobiDB-lite"/>
    </source>
</evidence>
<evidence type="ECO:0000269" key="6">
    <source>
    </source>
</evidence>
<evidence type="ECO:0000269" key="7">
    <source>
    </source>
</evidence>
<evidence type="ECO:0000269" key="8">
    <source>
    </source>
</evidence>
<evidence type="ECO:0000269" key="9">
    <source>
    </source>
</evidence>
<evidence type="ECO:0000269" key="10">
    <source>
    </source>
</evidence>
<evidence type="ECO:0000269" key="11">
    <source>
    </source>
</evidence>
<evidence type="ECO:0000269" key="12">
    <source>
    </source>
</evidence>
<evidence type="ECO:0000269" key="13">
    <source>
    </source>
</evidence>
<evidence type="ECO:0000269" key="14">
    <source>
    </source>
</evidence>
<evidence type="ECO:0000303" key="15">
    <source>
    </source>
</evidence>
<evidence type="ECO:0000303" key="16">
    <source>
    </source>
</evidence>
<evidence type="ECO:0000303" key="17">
    <source>
    </source>
</evidence>
<evidence type="ECO:0000303" key="18">
    <source>
    </source>
</evidence>
<evidence type="ECO:0000305" key="19"/>
<evidence type="ECO:0000305" key="20">
    <source>
    </source>
</evidence>
<evidence type="ECO:0000305" key="21">
    <source>
    </source>
</evidence>
<evidence type="ECO:0000312" key="22">
    <source>
        <dbReference type="HGNC" id="HGNC:20454"/>
    </source>
</evidence>
<evidence type="ECO:0007744" key="23">
    <source>
        <dbReference type="PDB" id="7OB9"/>
    </source>
</evidence>
<evidence type="ECO:0007744" key="24">
    <source>
        <dbReference type="PDB" id="7VBA"/>
    </source>
</evidence>
<evidence type="ECO:0007744" key="25">
    <source>
    </source>
</evidence>
<evidence type="ECO:0007829" key="26">
    <source>
        <dbReference type="PDB" id="7OB9"/>
    </source>
</evidence>
<evidence type="ECO:0007829" key="27">
    <source>
        <dbReference type="PDB" id="7OBA"/>
    </source>
</evidence>
<evidence type="ECO:0007829" key="28">
    <source>
        <dbReference type="PDB" id="7OBB"/>
    </source>
</evidence>
<accession>Q9H9Y6</accession>
<accession>B7Z6Y7</accession>
<accession>B7Z823</accession>
<accession>F5GZX4</accession>
<accession>F8W898</accession>
<accession>Q2TAM4</accession>
<accession>Q585T5</accession>
<accession>Q6ZRR2</accession>
<accession>Q9H9D3</accession>
<keyword id="KW-0002">3D-structure</keyword>
<keyword id="KW-0025">Alternative splicing</keyword>
<keyword id="KW-0158">Chromosome</keyword>
<keyword id="KW-0225">Disease variant</keyword>
<keyword id="KW-0240">DNA-directed RNA polymerase</keyword>
<keyword id="KW-0460">Magnesium</keyword>
<keyword id="KW-0479">Metal-binding</keyword>
<keyword id="KW-0548">Nucleotidyltransferase</keyword>
<keyword id="KW-0539">Nucleus</keyword>
<keyword id="KW-0597">Phosphoprotein</keyword>
<keyword id="KW-1267">Proteomics identification</keyword>
<keyword id="KW-1185">Reference proteome</keyword>
<keyword id="KW-0804">Transcription</keyword>
<keyword id="KW-0808">Transferase</keyword>
<keyword id="KW-0862">Zinc</keyword>
<keyword id="KW-0863">Zinc-finger</keyword>
<feature type="chain" id="PRO_0000048072" description="DNA-directed RNA polymerase I subunit RPA2">
    <location>
        <begin position="1"/>
        <end position="1135"/>
    </location>
</feature>
<feature type="zinc finger region" description="C4-type" evidence="12 13 23 24">
    <location>
        <begin position="1070"/>
        <end position="1101"/>
    </location>
</feature>
<feature type="region of interest" description="Disordered" evidence="5">
    <location>
        <begin position="1"/>
        <end position="24"/>
    </location>
</feature>
<feature type="region of interest" description="Loop B" evidence="12">
    <location>
        <begin position="194"/>
        <end position="208"/>
    </location>
</feature>
<feature type="region of interest" description="Loop A" evidence="12">
    <location>
        <begin position="236"/>
        <end position="247"/>
    </location>
</feature>
<feature type="region of interest" description="Fork loop 1" evidence="12">
    <location>
        <begin position="439"/>
        <end position="453"/>
    </location>
</feature>
<feature type="region of interest" description="Fork loop 2" evidence="12">
    <location>
        <begin position="474"/>
        <end position="489"/>
    </location>
</feature>
<feature type="binding site" evidence="12 13 23 24">
    <location>
        <position position="180"/>
    </location>
    <ligand>
        <name>RNA</name>
        <dbReference type="ChEBI" id="CHEBI:33697"/>
    </ligand>
</feature>
<feature type="binding site" evidence="13 23">
    <location>
        <position position="367"/>
    </location>
    <ligand>
        <name>RNA</name>
        <dbReference type="ChEBI" id="CHEBI:33697"/>
    </ligand>
</feature>
<feature type="binding site" evidence="1 3">
    <location>
        <position position="755"/>
    </location>
    <ligand>
        <name>Mg(2+)</name>
        <dbReference type="ChEBI" id="CHEBI:18420"/>
        <note>ligand shared with POLR1A/RPA1</note>
    </ligand>
</feature>
<feature type="binding site" evidence="12 24">
    <location>
        <position position="890"/>
    </location>
    <ligand>
        <name>RNA</name>
        <dbReference type="ChEBI" id="CHEBI:33697"/>
    </ligand>
</feature>
<feature type="binding site" evidence="13 23">
    <location>
        <position position="1020"/>
    </location>
    <ligand>
        <name>DNA</name>
        <dbReference type="ChEBI" id="CHEBI:16991"/>
        <label>nontemplate strand</label>
    </ligand>
</feature>
<feature type="binding site" evidence="12 13 23 24">
    <location>
        <position position="1036"/>
    </location>
    <ligand>
        <name>DNA</name>
        <dbReference type="ChEBI" id="CHEBI:16991"/>
        <label>template strand</label>
    </ligand>
</feature>
<feature type="binding site" evidence="12 13 23 24">
    <location>
        <position position="1070"/>
    </location>
    <ligand>
        <name>Zn(2+)</name>
        <dbReference type="ChEBI" id="CHEBI:29105"/>
    </ligand>
</feature>
<feature type="binding site" evidence="12 13 23 24">
    <location>
        <position position="1073"/>
    </location>
    <ligand>
        <name>Zn(2+)</name>
        <dbReference type="ChEBI" id="CHEBI:29105"/>
    </ligand>
</feature>
<feature type="binding site" evidence="12 13 23 24">
    <location>
        <position position="1098"/>
    </location>
    <ligand>
        <name>Zn(2+)</name>
        <dbReference type="ChEBI" id="CHEBI:29105"/>
    </ligand>
</feature>
<feature type="binding site" evidence="12 13 23 24">
    <location>
        <position position="1101"/>
    </location>
    <ligand>
        <name>Zn(2+)</name>
        <dbReference type="ChEBI" id="CHEBI:29105"/>
    </ligand>
</feature>
<feature type="site" description="Active site gating; blocks backward movement of nascent RNA" evidence="12">
    <location>
        <position position="687"/>
    </location>
</feature>
<feature type="modified residue" description="Phosphoserine" evidence="25">
    <location>
        <position position="1051"/>
    </location>
</feature>
<feature type="splice variant" id="VSP_056749" description="In isoform 4." evidence="15">
    <location>
        <begin position="1"/>
        <end position="211"/>
    </location>
</feature>
<feature type="splice variant" id="VSP_056750" description="In isoform 3." evidence="15">
    <original>M</original>
    <variation>MRAKEAAETGLRPLLPACTERLASGVYRETGVRCAGGHM</variation>
    <location>
        <position position="1"/>
    </location>
</feature>
<feature type="splice variant" id="VSP_017823" description="In isoform 2." evidence="15">
    <location>
        <begin position="61"/>
        <end position="116"/>
    </location>
</feature>
<feature type="splice variant" id="VSP_056751" description="In isoform 5." evidence="16">
    <original>EKLEGWLVSIKIAFDKKAQKTSVSMNTDNLMRIFTMGIDLTKPFEYLFATGNLRSKTGLGLLQDSGLCVVADKLNFIRYLSHFRCVHRGADFAKMRTTTVRRLLPESWGFLCPVHTPDGEPCGLMNHLTAVCEVVTQFVYTASIPALLCNLGVTPIDGAPHRSYSECYPVLLDGVMVGWVDKDLAPGIADSLRHFK</original>
    <variation>GSLPLMELPTDHT</variation>
    <location>
        <begin position="387"/>
        <end position="582"/>
    </location>
</feature>
<feature type="sequence variant" id="VAR_034476" description="In dbSNP:rs1545133." evidence="8">
    <original>S</original>
    <variation>L</variation>
    <location>
        <position position="295"/>
    </location>
</feature>
<feature type="sequence variant" id="VAR_084557" description="In TCS4; uncertain significance; dbSNP:rs1684443250." evidence="11">
    <original>S</original>
    <variation>R</variation>
    <location>
        <position position="682"/>
    </location>
</feature>
<feature type="sequence variant" id="VAR_071195">
    <original>H</original>
    <variation>R</variation>
    <location>
        <position position="887"/>
    </location>
</feature>
<feature type="sequence variant" id="VAR_084558" description="In TCS4; dbSNP:rs1684813071." evidence="11">
    <original>R</original>
    <variation>C</variation>
    <location>
        <position position="1003"/>
    </location>
</feature>
<feature type="sequence variant" id="VAR_084559" description="In TCS4; dbSNP:rs1684813071." evidence="11">
    <original>R</original>
    <variation>S</variation>
    <location>
        <position position="1003"/>
    </location>
</feature>
<feature type="sequence conflict" description="In Ref. 1; BAB14082." evidence="19" ref="1">
    <original>L</original>
    <variation>R</variation>
    <location>
        <position position="247"/>
    </location>
</feature>
<feature type="sequence conflict" description="In Ref. 3; AAI10834." evidence="19" ref="3">
    <original>E</original>
    <variation>G</variation>
    <location>
        <position position="360"/>
    </location>
</feature>
<feature type="sequence conflict" description="In Ref. 1; BAB14296." evidence="19" ref="1">
    <original>I</original>
    <variation>T</variation>
    <location>
        <position position="746"/>
    </location>
</feature>
<feature type="sequence conflict" description="In Ref. 1; BAC87247." evidence="19" ref="1">
    <original>D</original>
    <variation>G</variation>
    <location>
        <position position="800"/>
    </location>
</feature>
<feature type="sequence conflict" description="In Ref. 1; BAB14082." evidence="19" ref="1">
    <original>C</original>
    <variation>R</variation>
    <location>
        <position position="868"/>
    </location>
</feature>
<feature type="sequence conflict" description="In Ref. 1; BAB14082." evidence="19" ref="1">
    <original>Q</original>
    <variation>R</variation>
    <location>
        <position position="889"/>
    </location>
</feature>
<feature type="sequence conflict" description="In Ref. 1; BAH13809." evidence="19" ref="1">
    <original>E</original>
    <variation>G</variation>
    <location>
        <position position="1039"/>
    </location>
</feature>
<feature type="strand" evidence="26">
    <location>
        <begin position="6"/>
        <end position="9"/>
    </location>
</feature>
<feature type="strand" evidence="26">
    <location>
        <begin position="18"/>
        <end position="20"/>
    </location>
</feature>
<feature type="turn" evidence="26">
    <location>
        <begin position="22"/>
        <end position="25"/>
    </location>
</feature>
<feature type="helix" evidence="26">
    <location>
        <begin position="33"/>
        <end position="36"/>
    </location>
</feature>
<feature type="helix" evidence="28">
    <location>
        <begin position="37"/>
        <end position="39"/>
    </location>
</feature>
<feature type="helix" evidence="26">
    <location>
        <begin position="40"/>
        <end position="60"/>
    </location>
</feature>
<feature type="strand" evidence="26">
    <location>
        <begin position="64"/>
        <end position="67"/>
    </location>
</feature>
<feature type="strand" evidence="26">
    <location>
        <begin position="69"/>
        <end position="83"/>
    </location>
</feature>
<feature type="helix" evidence="26">
    <location>
        <begin position="100"/>
        <end position="105"/>
    </location>
</feature>
<feature type="strand" evidence="26">
    <location>
        <begin position="113"/>
        <end position="122"/>
    </location>
</feature>
<feature type="strand" evidence="26">
    <location>
        <begin position="125"/>
        <end position="135"/>
    </location>
</feature>
<feature type="strand" evidence="26">
    <location>
        <begin position="143"/>
        <end position="146"/>
    </location>
</feature>
<feature type="turn" evidence="26">
    <location>
        <begin position="147"/>
        <end position="150"/>
    </location>
</feature>
<feature type="helix" evidence="26">
    <location>
        <begin position="153"/>
        <end position="158"/>
    </location>
</feature>
<feature type="strand" evidence="26">
    <location>
        <begin position="170"/>
        <end position="172"/>
    </location>
</feature>
<feature type="strand" evidence="26">
    <location>
        <begin position="175"/>
        <end position="178"/>
    </location>
</feature>
<feature type="strand" evidence="26">
    <location>
        <begin position="181"/>
        <end position="185"/>
    </location>
</feature>
<feature type="strand" evidence="27">
    <location>
        <begin position="187"/>
        <end position="189"/>
    </location>
</feature>
<feature type="strand" evidence="26">
    <location>
        <begin position="191"/>
        <end position="194"/>
    </location>
</feature>
<feature type="helix" evidence="26">
    <location>
        <begin position="196"/>
        <end position="200"/>
    </location>
</feature>
<feature type="strand" evidence="26">
    <location>
        <begin position="201"/>
        <end position="216"/>
    </location>
</feature>
<feature type="turn" evidence="27">
    <location>
        <begin position="217"/>
        <end position="219"/>
    </location>
</feature>
<feature type="strand" evidence="26">
    <location>
        <begin position="221"/>
        <end position="229"/>
    </location>
</feature>
<feature type="strand" evidence="26">
    <location>
        <begin position="234"/>
        <end position="242"/>
    </location>
</feature>
<feature type="strand" evidence="26">
    <location>
        <begin position="244"/>
        <end position="248"/>
    </location>
</feature>
<feature type="helix" evidence="26">
    <location>
        <begin position="249"/>
        <end position="256"/>
    </location>
</feature>
<feature type="helix" evidence="26">
    <location>
        <begin position="261"/>
        <end position="268"/>
    </location>
</feature>
<feature type="strand" evidence="26">
    <location>
        <begin position="269"/>
        <end position="271"/>
    </location>
</feature>
<feature type="helix" evidence="26">
    <location>
        <begin position="276"/>
        <end position="291"/>
    </location>
</feature>
<feature type="helix" evidence="26">
    <location>
        <begin position="297"/>
        <end position="307"/>
    </location>
</feature>
<feature type="turn" evidence="26">
    <location>
        <begin position="310"/>
        <end position="312"/>
    </location>
</feature>
<feature type="helix" evidence="26">
    <location>
        <begin position="320"/>
        <end position="330"/>
    </location>
</feature>
<feature type="helix" evidence="26">
    <location>
        <begin position="339"/>
        <end position="357"/>
    </location>
</feature>
<feature type="strand" evidence="26">
    <location>
        <begin position="366"/>
        <end position="368"/>
    </location>
</feature>
<feature type="helix" evidence="26">
    <location>
        <begin position="369"/>
        <end position="371"/>
    </location>
</feature>
<feature type="strand" evidence="26">
    <location>
        <begin position="372"/>
        <end position="375"/>
    </location>
</feature>
<feature type="helix" evidence="26">
    <location>
        <begin position="377"/>
        <end position="405"/>
    </location>
</feature>
<feature type="turn" evidence="26">
    <location>
        <begin position="419"/>
        <end position="422"/>
    </location>
</feature>
<feature type="helix" evidence="26">
    <location>
        <begin position="428"/>
        <end position="436"/>
    </location>
</feature>
<feature type="strand" evidence="26">
    <location>
        <begin position="454"/>
        <end position="456"/>
    </location>
</feature>
<feature type="helix" evidence="26">
    <location>
        <begin position="462"/>
        <end position="465"/>
    </location>
</feature>
<feature type="helix" evidence="26">
    <location>
        <begin position="466"/>
        <end position="468"/>
    </location>
</feature>
<feature type="strand" evidence="26">
    <location>
        <begin position="470"/>
        <end position="473"/>
    </location>
</feature>
<feature type="helix" evidence="26">
    <location>
        <begin position="477"/>
        <end position="480"/>
    </location>
</feature>
<feature type="helix" evidence="27">
    <location>
        <begin position="485"/>
        <end position="487"/>
    </location>
</feature>
<feature type="helix" evidence="26">
    <location>
        <begin position="491"/>
        <end position="493"/>
    </location>
</feature>
<feature type="turn" evidence="26">
    <location>
        <begin position="494"/>
        <end position="496"/>
    </location>
</feature>
<feature type="turn" evidence="26">
    <location>
        <begin position="506"/>
        <end position="510"/>
    </location>
</feature>
<feature type="strand" evidence="26">
    <location>
        <begin position="511"/>
        <end position="514"/>
    </location>
</feature>
<feature type="helix" evidence="26">
    <location>
        <begin position="530"/>
        <end position="536"/>
    </location>
</feature>
<feature type="strand" evidence="26">
    <location>
        <begin position="540"/>
        <end position="544"/>
    </location>
</feature>
<feature type="helix" evidence="26">
    <location>
        <begin position="550"/>
        <end position="552"/>
    </location>
</feature>
<feature type="strand" evidence="26">
    <location>
        <begin position="553"/>
        <end position="560"/>
    </location>
</feature>
<feature type="strand" evidence="26">
    <location>
        <begin position="562"/>
        <end position="567"/>
    </location>
</feature>
<feature type="turn" evidence="26">
    <location>
        <begin position="568"/>
        <end position="570"/>
    </location>
</feature>
<feature type="helix" evidence="26">
    <location>
        <begin position="571"/>
        <end position="584"/>
    </location>
</feature>
<feature type="strand" evidence="26">
    <location>
        <begin position="594"/>
        <end position="598"/>
    </location>
</feature>
<feature type="strand" evidence="26">
    <location>
        <begin position="602"/>
        <end position="604"/>
    </location>
</feature>
<feature type="strand" evidence="26">
    <location>
        <begin position="609"/>
        <end position="613"/>
    </location>
</feature>
<feature type="strand" evidence="26">
    <location>
        <begin position="619"/>
        <end position="625"/>
    </location>
</feature>
<feature type="turn" evidence="26">
    <location>
        <begin position="626"/>
        <end position="629"/>
    </location>
</feature>
<feature type="strand" evidence="26">
    <location>
        <begin position="630"/>
        <end position="635"/>
    </location>
</feature>
<feature type="helix" evidence="26">
    <location>
        <begin position="636"/>
        <end position="639"/>
    </location>
</feature>
<feature type="strand" evidence="26">
    <location>
        <begin position="646"/>
        <end position="648"/>
    </location>
</feature>
<feature type="turn" evidence="26">
    <location>
        <begin position="653"/>
        <end position="655"/>
    </location>
</feature>
<feature type="strand" evidence="26">
    <location>
        <begin position="658"/>
        <end position="662"/>
    </location>
</feature>
<feature type="turn" evidence="26">
    <location>
        <begin position="663"/>
        <end position="666"/>
    </location>
</feature>
<feature type="helix" evidence="26">
    <location>
        <begin position="671"/>
        <end position="673"/>
    </location>
</feature>
<feature type="helix" evidence="26">
    <location>
        <begin position="677"/>
        <end position="679"/>
    </location>
</feature>
<feature type="helix" evidence="26">
    <location>
        <begin position="682"/>
        <end position="691"/>
    </location>
</feature>
<feature type="strand" evidence="26">
    <location>
        <begin position="693"/>
        <end position="695"/>
    </location>
</feature>
<feature type="strand" evidence="26">
    <location>
        <begin position="703"/>
        <end position="705"/>
    </location>
</feature>
<feature type="strand" evidence="26">
    <location>
        <begin position="712"/>
        <end position="716"/>
    </location>
</feature>
<feature type="strand" evidence="26">
    <location>
        <begin position="721"/>
        <end position="723"/>
    </location>
</feature>
<feature type="helix" evidence="26">
    <location>
        <begin position="726"/>
        <end position="729"/>
    </location>
</feature>
<feature type="helix" evidence="26">
    <location>
        <begin position="732"/>
        <end position="734"/>
    </location>
</feature>
<feature type="strand" evidence="26">
    <location>
        <begin position="739"/>
        <end position="741"/>
    </location>
</feature>
<feature type="strand" evidence="26">
    <location>
        <begin position="743"/>
        <end position="745"/>
    </location>
</feature>
<feature type="strand" evidence="27">
    <location>
        <begin position="749"/>
        <end position="751"/>
    </location>
</feature>
<feature type="strand" evidence="26">
    <location>
        <begin position="757"/>
        <end position="760"/>
    </location>
</feature>
<feature type="helix" evidence="26">
    <location>
        <begin position="761"/>
        <end position="765"/>
    </location>
</feature>
<feature type="turn" evidence="26">
    <location>
        <begin position="766"/>
        <end position="769"/>
    </location>
</feature>
<feature type="strand" evidence="26">
    <location>
        <begin position="771"/>
        <end position="780"/>
    </location>
</feature>
<feature type="turn" evidence="26">
    <location>
        <begin position="781"/>
        <end position="784"/>
    </location>
</feature>
<feature type="strand" evidence="26">
    <location>
        <begin position="788"/>
        <end position="790"/>
    </location>
</feature>
<feature type="strand" evidence="26">
    <location>
        <begin position="792"/>
        <end position="794"/>
    </location>
</feature>
<feature type="helix" evidence="27">
    <location>
        <begin position="801"/>
        <end position="803"/>
    </location>
</feature>
<feature type="turn" evidence="26">
    <location>
        <begin position="804"/>
        <end position="806"/>
    </location>
</feature>
<feature type="strand" evidence="27">
    <location>
        <begin position="811"/>
        <end position="813"/>
    </location>
</feature>
<feature type="strand" evidence="26">
    <location>
        <begin position="823"/>
        <end position="830"/>
    </location>
</feature>
<feature type="turn" evidence="26">
    <location>
        <begin position="831"/>
        <end position="833"/>
    </location>
</feature>
<feature type="strand" evidence="26">
    <location>
        <begin position="836"/>
        <end position="840"/>
    </location>
</feature>
<feature type="strand" evidence="26">
    <location>
        <begin position="847"/>
        <end position="855"/>
    </location>
</feature>
<feature type="strand" evidence="26">
    <location>
        <begin position="858"/>
        <end position="860"/>
    </location>
</feature>
<feature type="strand" evidence="26">
    <location>
        <begin position="866"/>
        <end position="873"/>
    </location>
</feature>
<feature type="strand" evidence="26">
    <location>
        <begin position="882"/>
        <end position="884"/>
    </location>
</feature>
<feature type="strand" evidence="27">
    <location>
        <begin position="886"/>
        <end position="888"/>
    </location>
</feature>
<feature type="strand" evidence="26">
    <location>
        <begin position="890"/>
        <end position="897"/>
    </location>
</feature>
<feature type="helix" evidence="27">
    <location>
        <begin position="899"/>
        <end position="901"/>
    </location>
</feature>
<feature type="strand" evidence="27">
    <location>
        <begin position="905"/>
        <end position="908"/>
    </location>
</feature>
<feature type="strand" evidence="26">
    <location>
        <begin position="912"/>
        <end position="915"/>
    </location>
</feature>
<feature type="helix" evidence="26">
    <location>
        <begin position="917"/>
        <end position="919"/>
    </location>
</feature>
<feature type="turn" evidence="26">
    <location>
        <begin position="921"/>
        <end position="923"/>
    </location>
</feature>
<feature type="helix" evidence="26">
    <location>
        <begin position="927"/>
        <end position="941"/>
    </location>
</feature>
<feature type="strand" evidence="26">
    <location>
        <begin position="954"/>
        <end position="956"/>
    </location>
</feature>
<feature type="helix" evidence="26">
    <location>
        <begin position="958"/>
        <end position="968"/>
    </location>
</feature>
<feature type="strand" evidence="26">
    <location>
        <begin position="975"/>
        <end position="977"/>
    </location>
</feature>
<feature type="turn" evidence="26">
    <location>
        <begin position="982"/>
        <end position="984"/>
    </location>
</feature>
<feature type="strand" evidence="26">
    <location>
        <begin position="992"/>
        <end position="994"/>
    </location>
</feature>
<feature type="strand" evidence="26">
    <location>
        <begin position="997"/>
        <end position="1003"/>
    </location>
</feature>
<feature type="helix" evidence="26">
    <location>
        <begin position="1006"/>
        <end position="1008"/>
    </location>
</feature>
<feature type="strand" evidence="26">
    <location>
        <begin position="1011"/>
        <end position="1015"/>
    </location>
</feature>
<feature type="turn" evidence="26">
    <location>
        <begin position="1020"/>
        <end position="1022"/>
    </location>
</feature>
<feature type="turn" evidence="26">
    <location>
        <begin position="1029"/>
        <end position="1032"/>
    </location>
</feature>
<feature type="strand" evidence="26">
    <location>
        <begin position="1034"/>
        <end position="1037"/>
    </location>
</feature>
<feature type="helix" evidence="26">
    <location>
        <begin position="1039"/>
        <end position="1046"/>
    </location>
</feature>
<feature type="turn" evidence="26">
    <location>
        <begin position="1047"/>
        <end position="1049"/>
    </location>
</feature>
<feature type="helix" evidence="26">
    <location>
        <begin position="1051"/>
        <end position="1059"/>
    </location>
</feature>
<feature type="strand" evidence="26">
    <location>
        <begin position="1065"/>
        <end position="1070"/>
    </location>
</feature>
<feature type="turn" evidence="26">
    <location>
        <begin position="1071"/>
        <end position="1074"/>
    </location>
</feature>
<feature type="strand" evidence="26">
    <location>
        <begin position="1075"/>
        <end position="1081"/>
    </location>
</feature>
<feature type="strand" evidence="27">
    <location>
        <begin position="1088"/>
        <end position="1091"/>
    </location>
</feature>
<feature type="strand" evidence="26">
    <location>
        <begin position="1096"/>
        <end position="1098"/>
    </location>
</feature>
<feature type="turn" evidence="26">
    <location>
        <begin position="1099"/>
        <end position="1101"/>
    </location>
</feature>
<feature type="strand" evidence="26">
    <location>
        <begin position="1104"/>
        <end position="1112"/>
    </location>
</feature>
<feature type="helix" evidence="26">
    <location>
        <begin position="1114"/>
        <end position="1124"/>
    </location>
</feature>
<feature type="turn" evidence="26">
    <location>
        <begin position="1125"/>
        <end position="1127"/>
    </location>
</feature>
<feature type="strand" evidence="26">
    <location>
        <begin position="1128"/>
        <end position="1135"/>
    </location>
</feature>